<proteinExistence type="evidence at protein level"/>
<feature type="signal peptide" evidence="1">
    <location>
        <begin position="1"/>
        <end position="21"/>
    </location>
</feature>
<feature type="chain" id="PRO_0000431512" description="Microcystinase C">
    <location>
        <begin position="22"/>
        <end position="507" status="greater than"/>
    </location>
</feature>
<feature type="binding site" evidence="8">
    <location>
        <position position="167"/>
    </location>
    <ligand>
        <name>Zn(2+)</name>
        <dbReference type="ChEBI" id="CHEBI:29105"/>
    </ligand>
</feature>
<feature type="binding site" evidence="8">
    <location>
        <position position="169"/>
    </location>
    <ligand>
        <name>Zn(2+)</name>
        <dbReference type="ChEBI" id="CHEBI:29105"/>
    </ligand>
</feature>
<feature type="binding site" evidence="8">
    <location>
        <position position="191"/>
    </location>
    <ligand>
        <name>Zn(2+)</name>
        <dbReference type="ChEBI" id="CHEBI:29105"/>
    </ligand>
</feature>
<feature type="non-terminal residue" evidence="9">
    <location>
        <position position="507"/>
    </location>
</feature>
<feature type="strand" evidence="10">
    <location>
        <begin position="29"/>
        <end position="37"/>
    </location>
</feature>
<feature type="helix" evidence="10">
    <location>
        <begin position="50"/>
        <end position="56"/>
    </location>
</feature>
<feature type="strand" evidence="10">
    <location>
        <begin position="57"/>
        <end position="59"/>
    </location>
</feature>
<feature type="helix" evidence="10">
    <location>
        <begin position="73"/>
        <end position="83"/>
    </location>
</feature>
<feature type="strand" evidence="10">
    <location>
        <begin position="86"/>
        <end position="96"/>
    </location>
</feature>
<feature type="strand" evidence="10">
    <location>
        <begin position="99"/>
        <end position="101"/>
    </location>
</feature>
<feature type="helix" evidence="10">
    <location>
        <begin position="105"/>
        <end position="122"/>
    </location>
</feature>
<feature type="strand" evidence="10">
    <location>
        <begin position="126"/>
        <end position="131"/>
    </location>
</feature>
<feature type="helix" evidence="10">
    <location>
        <begin position="144"/>
        <end position="156"/>
    </location>
</feature>
<feature type="strand" evidence="10">
    <location>
        <begin position="160"/>
        <end position="166"/>
    </location>
</feature>
<feature type="helix" evidence="10">
    <location>
        <begin position="174"/>
        <end position="179"/>
    </location>
</feature>
<feature type="strand" evidence="10">
    <location>
        <begin position="180"/>
        <end position="185"/>
    </location>
</feature>
<feature type="helix" evidence="10">
    <location>
        <begin position="194"/>
        <end position="209"/>
    </location>
</feature>
<feature type="strand" evidence="10">
    <location>
        <begin position="215"/>
        <end position="224"/>
    </location>
</feature>
<feature type="helix" evidence="10">
    <location>
        <begin position="235"/>
        <end position="247"/>
    </location>
</feature>
<feature type="strand" evidence="10">
    <location>
        <begin position="252"/>
        <end position="257"/>
    </location>
</feature>
<feature type="strand" evidence="10">
    <location>
        <begin position="269"/>
        <end position="278"/>
    </location>
</feature>
<feature type="helix" evidence="10">
    <location>
        <begin position="280"/>
        <end position="296"/>
    </location>
</feature>
<feature type="helix" evidence="10">
    <location>
        <begin position="310"/>
        <end position="318"/>
    </location>
</feature>
<feature type="strand" evidence="10">
    <location>
        <begin position="322"/>
        <end position="328"/>
    </location>
</feature>
<feature type="helix" evidence="10">
    <location>
        <begin position="330"/>
        <end position="332"/>
    </location>
</feature>
<feature type="helix" evidence="10">
    <location>
        <begin position="334"/>
        <end position="336"/>
    </location>
</feature>
<feature type="helix" evidence="10">
    <location>
        <begin position="344"/>
        <end position="351"/>
    </location>
</feature>
<feature type="strand" evidence="10">
    <location>
        <begin position="356"/>
        <end position="363"/>
    </location>
</feature>
<feature type="helix" evidence="10">
    <location>
        <begin position="365"/>
        <end position="374"/>
    </location>
</feature>
<feature type="strand" evidence="10">
    <location>
        <begin position="379"/>
        <end position="385"/>
    </location>
</feature>
<feature type="strand" evidence="10">
    <location>
        <begin position="388"/>
        <end position="390"/>
    </location>
</feature>
<feature type="strand" evidence="10">
    <location>
        <begin position="396"/>
        <end position="410"/>
    </location>
</feature>
<feature type="strand" evidence="10">
    <location>
        <begin position="419"/>
        <end position="428"/>
    </location>
</feature>
<feature type="strand" evidence="10">
    <location>
        <begin position="431"/>
        <end position="438"/>
    </location>
</feature>
<feature type="helix" evidence="10">
    <location>
        <begin position="446"/>
        <end position="449"/>
    </location>
</feature>
<feature type="turn" evidence="10">
    <location>
        <begin position="450"/>
        <end position="452"/>
    </location>
</feature>
<feature type="helix" evidence="10">
    <location>
        <begin position="455"/>
        <end position="457"/>
    </location>
</feature>
<feature type="strand" evidence="10">
    <location>
        <begin position="459"/>
        <end position="464"/>
    </location>
</feature>
<feature type="helix" evidence="10">
    <location>
        <begin position="470"/>
        <end position="473"/>
    </location>
</feature>
<feature type="strand" evidence="10">
    <location>
        <begin position="478"/>
        <end position="482"/>
    </location>
</feature>
<feature type="strand" evidence="10">
    <location>
        <begin position="488"/>
        <end position="490"/>
    </location>
</feature>
<reference evidence="9" key="1">
    <citation type="journal article" date="2001" name="Environ. Toxicol.">
        <title>Characterisation of a gene cluster involved in bacterial degradation of the cyanobacterial toxin microcystin LR.</title>
        <authorList>
            <person name="Bourne D.G."/>
            <person name="Riddles P."/>
            <person name="Jones G.J."/>
            <person name="Smith W."/>
            <person name="Blakeley R.L."/>
        </authorList>
    </citation>
    <scope>NUCLEOTIDE SEQUENCE [GENOMIC DNA]</scope>
    <scope>FUNCTION</scope>
    <source>
        <strain evidence="9">ACM-3962</strain>
    </source>
</reference>
<reference key="2">
    <citation type="journal article" date="1996" name="Appl. Environ. Microbiol.">
        <title>Enzymatic pathway for the bacterial degradation of the cyanobacterial cyclic peptide toxin microcystin LR.</title>
        <authorList>
            <person name="Bourne D.G."/>
            <person name="Jones G.J."/>
            <person name="Blakeley R.L."/>
            <person name="Jones A."/>
            <person name="Negri A.P."/>
            <person name="Riddles P."/>
        </authorList>
    </citation>
    <scope>FUNCTION</scope>
    <scope>ACTIVITY REGULATION</scope>
    <source>
        <strain evidence="7">ACM-3962</strain>
    </source>
</reference>
<reference key="3">
    <citation type="journal article" date="2012" name="Chem. Res. Toxicol.">
        <title>Verification of the role of MlrC in microcystin biodegradation by studies using a heterologously expressed enzyme.</title>
        <authorList>
            <person name="Dziga D."/>
            <person name="Wasylewski M."/>
            <person name="Szetela A."/>
            <person name="Bochenska O."/>
            <person name="Wladyka B."/>
        </authorList>
    </citation>
    <scope>FUNCTION</scope>
    <source>
        <strain evidence="6">ACM-3962</strain>
    </source>
</reference>
<protein>
    <recommendedName>
        <fullName evidence="6">Microcystinase C</fullName>
        <shortName evidence="5 9">MlrC</shortName>
    </recommendedName>
</protein>
<organism>
    <name type="scientific">Sphingomonas sp</name>
    <dbReference type="NCBI Taxonomy" id="28214"/>
    <lineage>
        <taxon>Bacteria</taxon>
        <taxon>Pseudomonadati</taxon>
        <taxon>Pseudomonadota</taxon>
        <taxon>Alphaproteobacteria</taxon>
        <taxon>Sphingomonadales</taxon>
        <taxon>Sphingomonadaceae</taxon>
        <taxon>Sphingomonas</taxon>
    </lineage>
</organism>
<name>MLRC_SPHSX</name>
<comment type="function">
    <text evidence="2 3 4">Involved in peptidolytic degradation of cyclic heptapeptide hepatotoxin microcystin (MC) (PubMed:11769251, PubMed:8899999). Cleaves both linear MC and the tetrapeptide degradation product of MC (PubMed:11769251). Cleaves the Adda-Glu peptide bond of linear MC heptapeptides (PubMed:22591122).</text>
</comment>
<comment type="cofactor">
    <cofactor evidence="8">
        <name>Zn(2+)</name>
        <dbReference type="ChEBI" id="CHEBI:29105"/>
    </cofactor>
    <text evidence="8">Binds 1 zinc ion per subunit.</text>
</comment>
<comment type="activity regulation">
    <text evidence="4">Inhibited by the metal chelators EDTA and 1,10-phenanthroline.</text>
</comment>
<comment type="similarity">
    <text evidence="8">Belongs to the peptidase M81 family.</text>
</comment>
<comment type="caution">
    <text evidence="2 3 4">MC degradation was originally described as sequential, three-step process catalyzed by enzymes subsequently named as MlrA, MlrB and MlrC, where MlrC catalyzes hydrolysis of tetrapeptides generated by MlrB (PubMed:8899999). It is shown later that purified MlrC hydrolyzes also linear MC (PubMed:11769251, PubMed:22591122) so it is not clear if MlrB is indispensable in this pathway.</text>
</comment>
<keyword id="KW-0002">3D-structure</keyword>
<keyword id="KW-0378">Hydrolase</keyword>
<keyword id="KW-0479">Metal-binding</keyword>
<keyword id="KW-0482">Metalloprotease</keyword>
<keyword id="KW-0645">Protease</keyword>
<keyword id="KW-0732">Signal</keyword>
<keyword id="KW-0862">Zinc</keyword>
<dbReference type="EMBL" id="AF411070">
    <property type="protein sequence ID" value="AAL10288.1"/>
    <property type="molecule type" value="Genomic_DNA"/>
</dbReference>
<dbReference type="PDB" id="7YLQ">
    <property type="method" value="X-ray"/>
    <property type="resolution" value="2.68 A"/>
    <property type="chains" value="A/B=1-507"/>
</dbReference>
<dbReference type="PDBsum" id="7YLQ"/>
<dbReference type="SMR" id="Q93CA6"/>
<dbReference type="MEROPS" id="M81.001"/>
<dbReference type="GO" id="GO:0046872">
    <property type="term" value="F:metal ion binding"/>
    <property type="evidence" value="ECO:0000314"/>
    <property type="project" value="UniProtKB"/>
</dbReference>
<dbReference type="GO" id="GO:0008237">
    <property type="term" value="F:metallopeptidase activity"/>
    <property type="evidence" value="ECO:0000314"/>
    <property type="project" value="UniProtKB"/>
</dbReference>
<dbReference type="GO" id="GO:0008233">
    <property type="term" value="F:peptidase activity"/>
    <property type="evidence" value="ECO:0000314"/>
    <property type="project" value="UniProtKB"/>
</dbReference>
<dbReference type="GO" id="GO:0008270">
    <property type="term" value="F:zinc ion binding"/>
    <property type="evidence" value="ECO:0000304"/>
    <property type="project" value="UniProtKB"/>
</dbReference>
<dbReference type="GO" id="GO:0006508">
    <property type="term" value="P:proteolysis"/>
    <property type="evidence" value="ECO:0000314"/>
    <property type="project" value="UniProtKB"/>
</dbReference>
<dbReference type="InterPro" id="IPR009197">
    <property type="entry name" value="MlrC"/>
</dbReference>
<dbReference type="InterPro" id="IPR010799">
    <property type="entry name" value="MlrC_C"/>
</dbReference>
<dbReference type="InterPro" id="IPR015995">
    <property type="entry name" value="MlrC_N"/>
</dbReference>
<dbReference type="NCBIfam" id="NF041767">
    <property type="entry name" value="micro_ase_MlrC"/>
    <property type="match status" value="1"/>
</dbReference>
<dbReference type="Pfam" id="PF07364">
    <property type="entry name" value="DUF1485"/>
    <property type="match status" value="1"/>
</dbReference>
<dbReference type="Pfam" id="PF07171">
    <property type="entry name" value="MlrC_C"/>
    <property type="match status" value="1"/>
</dbReference>
<dbReference type="PIRSF" id="PIRSF012702">
    <property type="entry name" value="UCP012702"/>
    <property type="match status" value="1"/>
</dbReference>
<evidence type="ECO:0000255" key="1"/>
<evidence type="ECO:0000269" key="2">
    <source>
    </source>
</evidence>
<evidence type="ECO:0000269" key="3">
    <source>
    </source>
</evidence>
<evidence type="ECO:0000269" key="4">
    <source>
    </source>
</evidence>
<evidence type="ECO:0000303" key="5">
    <source>
    </source>
</evidence>
<evidence type="ECO:0000303" key="6">
    <source>
    </source>
</evidence>
<evidence type="ECO:0000303" key="7">
    <source>
    </source>
</evidence>
<evidence type="ECO:0000305" key="8"/>
<evidence type="ECO:0000312" key="9">
    <source>
        <dbReference type="EMBL" id="AAL10288.1"/>
    </source>
</evidence>
<evidence type="ECO:0007829" key="10">
    <source>
        <dbReference type="PDB" id="7YLQ"/>
    </source>
</evidence>
<accession>Q93CA6</accession>
<gene>
    <name evidence="9" type="primary">mlrC</name>
</gene>
<sequence length="507" mass="54788">MLDRRTLMGGILSMAGSKATGAALPGRRLRVFVATLGTETNSFSPLPTGLDAFRATMLWRPGEHPDFATEATGPLWAARERAREGRYEVIEGTCAFAMPGGPVSAQAYQLLRDEILDQLRRAMPVDIVAFGLHGAMLAFGEDECEADLLERARAIVGPDVALGAELDLHAHLSQRLVRAADVLVAFKYYPHIDYVERARDLLDLLERIRAGEIMPTSSLFNCQMVAGLATQSSPMKELVADLFEFERRGEVLSGSLIQGFRAGDVARMGSKVLIYTNNDQPAAASIAQDFGRRYQAMASIMKGNGPERSFAADIELAKAATAYPVILVDSSDNPGGGASGDNMALARAMLDNDLVPSCIGPIWDPLAVQLGFEAGLGADFSLRVGGKVGEASGLPLDVRGKITGLAENVTQNLQGSRPPLGRVVCISTAGLDIIVSEIRDQCYGPDMFRALGVEPANKRYVAVKSSEQWRIGFGDMGRSVIYVASSQQSSIRHYHKRSRPMWPFEPV</sequence>